<feature type="chain" id="PRO_0000349191" description="Glutaredoxin domain-containing cysteine-rich protein 2">
    <location>
        <begin position="1"/>
        <end position="248"/>
    </location>
</feature>
<feature type="region of interest" description="Disordered" evidence="2">
    <location>
        <begin position="1"/>
        <end position="20"/>
    </location>
</feature>
<feature type="region of interest" description="Disordered" evidence="2">
    <location>
        <begin position="150"/>
        <end position="172"/>
    </location>
</feature>
<feature type="compositionally biased region" description="Basic and acidic residues" evidence="2">
    <location>
        <begin position="1"/>
        <end position="16"/>
    </location>
</feature>
<feature type="compositionally biased region" description="Basic and acidic residues" evidence="2">
    <location>
        <begin position="157"/>
        <end position="172"/>
    </location>
</feature>
<feature type="sequence variant" id="VAR_060192" description="In dbSNP:rs2569006.">
    <original>L</original>
    <variation>F</variation>
    <location>
        <position position="181"/>
    </location>
</feature>
<reference key="1">
    <citation type="journal article" date="2004" name="Nature">
        <title>The DNA sequence and comparative analysis of human chromosome 5.</title>
        <authorList>
            <person name="Schmutz J."/>
            <person name="Martin J."/>
            <person name="Terry A."/>
            <person name="Couronne O."/>
            <person name="Grimwood J."/>
            <person name="Lowry S."/>
            <person name="Gordon L.A."/>
            <person name="Scott D."/>
            <person name="Xie G."/>
            <person name="Huang W."/>
            <person name="Hellsten U."/>
            <person name="Tran-Gyamfi M."/>
            <person name="She X."/>
            <person name="Prabhakar S."/>
            <person name="Aerts A."/>
            <person name="Altherr M."/>
            <person name="Bajorek E."/>
            <person name="Black S."/>
            <person name="Branscomb E."/>
            <person name="Caoile C."/>
            <person name="Challacombe J.F."/>
            <person name="Chan Y.M."/>
            <person name="Denys M."/>
            <person name="Detter J.C."/>
            <person name="Escobar J."/>
            <person name="Flowers D."/>
            <person name="Fotopulos D."/>
            <person name="Glavina T."/>
            <person name="Gomez M."/>
            <person name="Gonzales E."/>
            <person name="Goodstein D."/>
            <person name="Grigoriev I."/>
            <person name="Groza M."/>
            <person name="Hammon N."/>
            <person name="Hawkins T."/>
            <person name="Haydu L."/>
            <person name="Israni S."/>
            <person name="Jett J."/>
            <person name="Kadner K."/>
            <person name="Kimball H."/>
            <person name="Kobayashi A."/>
            <person name="Lopez F."/>
            <person name="Lou Y."/>
            <person name="Martinez D."/>
            <person name="Medina C."/>
            <person name="Morgan J."/>
            <person name="Nandkeshwar R."/>
            <person name="Noonan J.P."/>
            <person name="Pitluck S."/>
            <person name="Pollard M."/>
            <person name="Predki P."/>
            <person name="Priest J."/>
            <person name="Ramirez L."/>
            <person name="Retterer J."/>
            <person name="Rodriguez A."/>
            <person name="Rogers S."/>
            <person name="Salamov A."/>
            <person name="Salazar A."/>
            <person name="Thayer N."/>
            <person name="Tice H."/>
            <person name="Tsai M."/>
            <person name="Ustaszewska A."/>
            <person name="Vo N."/>
            <person name="Wheeler J."/>
            <person name="Wu K."/>
            <person name="Yang J."/>
            <person name="Dickson M."/>
            <person name="Cheng J.-F."/>
            <person name="Eichler E.E."/>
            <person name="Olsen A."/>
            <person name="Pennacchio L.A."/>
            <person name="Rokhsar D.S."/>
            <person name="Richardson P."/>
            <person name="Lucas S.M."/>
            <person name="Myers R.M."/>
            <person name="Rubin E.M."/>
        </authorList>
    </citation>
    <scope>NUCLEOTIDE SEQUENCE [LARGE SCALE GENOMIC DNA]</scope>
</reference>
<reference key="2">
    <citation type="journal article" date="2014" name="Hum. Mutat.">
        <title>A frameshift mutation in GRXCR2 causes recessively inherited hearing loss.</title>
        <authorList>
            <person name="Imtiaz A."/>
            <person name="Kohrman D.C."/>
            <person name="Naz S."/>
        </authorList>
    </citation>
    <scope>INVOLVEMENT IN DFNB101</scope>
    <scope>FUNCTION</scope>
</reference>
<gene>
    <name type="primary">GRXCR2</name>
</gene>
<sequence length="248" mass="28284">MEDPEKKLNQKSDGKPRKVRFKISSSYSGRVLKQVFEDGQELESPKEEYPHSFLQESLETMDGVYGSGEVPRPQMCSPKLTAQRISVFREGNAYTLAGGQPRFNDYKANDHKPLPIIDFGKIIIYTNNLKIIRTPMDKRDFVRKILQKEEEAEEESLMNKEESYGGRDQHDRPLVEAESTLPQNRYTQEGDIPEDSCFHCRGSGSATCSLCHGSKFSMLANRFKESYRALRCPACNENGLQPCQICNQ</sequence>
<comment type="function">
    <text evidence="1 3">Required for hearing (By similarity). Plays a role in maintaining cochlear stereocilia bundles that are involved in sound detection (PubMed:24619944). Ensures the restriction of TPRN to the basal region of stereocilia in hair cells (By similarity).</text>
</comment>
<comment type="subunit">
    <text evidence="1">Interacts with TPRN; the interaction restricts TPRN to the stereocilum basal region.</text>
</comment>
<comment type="subcellular location">
    <subcellularLocation>
        <location evidence="1">Cell projection</location>
        <location evidence="1">Stereocilium</location>
    </subcellularLocation>
    <text evidence="1">Concentrated at the basal taper region of stereocilia in early postnatal development. In adult hair cells, concentrated at the basal region but also detected along the stereocilium shaft.</text>
</comment>
<comment type="disease" evidence="3">
    <disease id="DI-04121">
        <name>Deafness, autosomal recessive, 101</name>
        <acronym>DFNB101</acronym>
        <description>A form of non-syndromic deafness characterized by bilateral, moderate to severe hearing loss. Vestibular function is unaffected.</description>
        <dbReference type="MIM" id="615837"/>
    </disease>
    <text>The disease is caused by variants affecting the gene represented in this entry.</text>
</comment>
<comment type="similarity">
    <text evidence="4">Belongs to the GRXCR2 family.</text>
</comment>
<comment type="caution">
    <text evidence="4">Although it shares high sequence similarity with GRXCR1, it does not contain a canonical glutaredoxin domain.</text>
</comment>
<accession>A6NFK2</accession>
<organism>
    <name type="scientific">Homo sapiens</name>
    <name type="common">Human</name>
    <dbReference type="NCBI Taxonomy" id="9606"/>
    <lineage>
        <taxon>Eukaryota</taxon>
        <taxon>Metazoa</taxon>
        <taxon>Chordata</taxon>
        <taxon>Craniata</taxon>
        <taxon>Vertebrata</taxon>
        <taxon>Euteleostomi</taxon>
        <taxon>Mammalia</taxon>
        <taxon>Eutheria</taxon>
        <taxon>Euarchontoglires</taxon>
        <taxon>Primates</taxon>
        <taxon>Haplorrhini</taxon>
        <taxon>Catarrhini</taxon>
        <taxon>Hominidae</taxon>
        <taxon>Homo</taxon>
    </lineage>
</organism>
<name>GRCR2_HUMAN</name>
<proteinExistence type="inferred from homology"/>
<dbReference type="EMBL" id="AC011359">
    <property type="status" value="NOT_ANNOTATED_CDS"/>
    <property type="molecule type" value="Genomic_DNA"/>
</dbReference>
<dbReference type="CCDS" id="CCDS34263.1"/>
<dbReference type="RefSeq" id="NP_001073985.1">
    <property type="nucleotide sequence ID" value="NM_001080516.2"/>
</dbReference>
<dbReference type="SMR" id="A6NFK2"/>
<dbReference type="BioGRID" id="568604">
    <property type="interactions" value="1"/>
</dbReference>
<dbReference type="FunCoup" id="A6NFK2">
    <property type="interactions" value="5"/>
</dbReference>
<dbReference type="IntAct" id="A6NFK2">
    <property type="interactions" value="1"/>
</dbReference>
<dbReference type="STRING" id="9606.ENSP00000367214"/>
<dbReference type="iPTMnet" id="A6NFK2"/>
<dbReference type="PhosphoSitePlus" id="A6NFK2"/>
<dbReference type="BioMuta" id="GRXCR2"/>
<dbReference type="MassIVE" id="A6NFK2"/>
<dbReference type="PaxDb" id="9606-ENSP00000367214"/>
<dbReference type="PeptideAtlas" id="A6NFK2"/>
<dbReference type="Antibodypedia" id="71010">
    <property type="antibodies" value="14 antibodies from 7 providers"/>
</dbReference>
<dbReference type="DNASU" id="643226"/>
<dbReference type="Ensembl" id="ENST00000377976.3">
    <property type="protein sequence ID" value="ENSP00000367214.1"/>
    <property type="gene ID" value="ENSG00000204928.3"/>
</dbReference>
<dbReference type="GeneID" id="643226"/>
<dbReference type="KEGG" id="hsa:643226"/>
<dbReference type="MANE-Select" id="ENST00000377976.3">
    <property type="protein sequence ID" value="ENSP00000367214.1"/>
    <property type="RefSeq nucleotide sequence ID" value="NM_001080516.2"/>
    <property type="RefSeq protein sequence ID" value="NP_001073985.1"/>
</dbReference>
<dbReference type="UCSC" id="uc003lns.1">
    <property type="organism name" value="human"/>
</dbReference>
<dbReference type="AGR" id="HGNC:33862"/>
<dbReference type="CTD" id="643226"/>
<dbReference type="DisGeNET" id="643226"/>
<dbReference type="GeneCards" id="GRXCR2"/>
<dbReference type="HGNC" id="HGNC:33862">
    <property type="gene designation" value="GRXCR2"/>
</dbReference>
<dbReference type="HPA" id="ENSG00000204928">
    <property type="expression patterns" value="Not detected"/>
</dbReference>
<dbReference type="MalaCards" id="GRXCR2"/>
<dbReference type="MIM" id="615762">
    <property type="type" value="gene"/>
</dbReference>
<dbReference type="MIM" id="615837">
    <property type="type" value="phenotype"/>
</dbReference>
<dbReference type="neXtProt" id="NX_A6NFK2"/>
<dbReference type="OpenTargets" id="ENSG00000204928"/>
<dbReference type="Orphanet" id="90636">
    <property type="disease" value="Rare autosomal recessive non-syndromic sensorineural deafness type DFNB"/>
</dbReference>
<dbReference type="PharmGKB" id="PA164720311"/>
<dbReference type="VEuPathDB" id="HostDB:ENSG00000204928"/>
<dbReference type="eggNOG" id="KOG2824">
    <property type="taxonomic scope" value="Eukaryota"/>
</dbReference>
<dbReference type="GeneTree" id="ENSGT00940000158849"/>
<dbReference type="HOGENOM" id="CLU_067117_0_0_1"/>
<dbReference type="InParanoid" id="A6NFK2"/>
<dbReference type="OMA" id="PFFNDYK"/>
<dbReference type="OrthoDB" id="423313at2759"/>
<dbReference type="PAN-GO" id="A6NFK2">
    <property type="GO annotations" value="4 GO annotations based on evolutionary models"/>
</dbReference>
<dbReference type="PhylomeDB" id="A6NFK2"/>
<dbReference type="TreeFam" id="TF315372"/>
<dbReference type="Reactome" id="R-HSA-9662360">
    <property type="pathway name" value="Sensory processing of sound by inner hair cells of the cochlea"/>
</dbReference>
<dbReference type="Reactome" id="R-HSA-9662361">
    <property type="pathway name" value="Sensory processing of sound by outer hair cells of the cochlea"/>
</dbReference>
<dbReference type="SignaLink" id="A6NFK2"/>
<dbReference type="BioGRID-ORCS" id="643226">
    <property type="hits" value="15 hits in 1139 CRISPR screens"/>
</dbReference>
<dbReference type="ChiTaRS" id="GRXCR2">
    <property type="organism name" value="human"/>
</dbReference>
<dbReference type="GenomeRNAi" id="643226"/>
<dbReference type="Pharos" id="A6NFK2">
    <property type="development level" value="Tbio"/>
</dbReference>
<dbReference type="PRO" id="PR:A6NFK2"/>
<dbReference type="Proteomes" id="UP000005640">
    <property type="component" value="Chromosome 5"/>
</dbReference>
<dbReference type="RNAct" id="A6NFK2">
    <property type="molecule type" value="protein"/>
</dbReference>
<dbReference type="Bgee" id="ENSG00000204928">
    <property type="expression patterns" value="Expressed in male germ line stem cell (sensu Vertebrata) in testis and 18 other cell types or tissues"/>
</dbReference>
<dbReference type="ExpressionAtlas" id="A6NFK2">
    <property type="expression patterns" value="baseline and differential"/>
</dbReference>
<dbReference type="GO" id="GO:0005902">
    <property type="term" value="C:microvillus"/>
    <property type="evidence" value="ECO:0000315"/>
    <property type="project" value="MGI"/>
</dbReference>
<dbReference type="GO" id="GO:0120044">
    <property type="term" value="C:stereocilium base"/>
    <property type="evidence" value="ECO:0000318"/>
    <property type="project" value="GO_Central"/>
</dbReference>
<dbReference type="GO" id="GO:0120043">
    <property type="term" value="C:stereocilium shaft"/>
    <property type="evidence" value="ECO:0000318"/>
    <property type="project" value="GO_Central"/>
</dbReference>
<dbReference type="GO" id="GO:0060088">
    <property type="term" value="P:auditory receptor cell stereocilium organization"/>
    <property type="evidence" value="ECO:0007669"/>
    <property type="project" value="Ensembl"/>
</dbReference>
<dbReference type="GO" id="GO:0033365">
    <property type="term" value="P:protein localization to organelle"/>
    <property type="evidence" value="ECO:0007669"/>
    <property type="project" value="Ensembl"/>
</dbReference>
<dbReference type="GO" id="GO:0007605">
    <property type="term" value="P:sensory perception of sound"/>
    <property type="evidence" value="ECO:0000315"/>
    <property type="project" value="MGI"/>
</dbReference>
<dbReference type="InterPro" id="IPR033023">
    <property type="entry name" value="GRXCR2"/>
</dbReference>
<dbReference type="InterPro" id="IPR036410">
    <property type="entry name" value="HSP_DnaJ_Cys-rich_dom_sf"/>
</dbReference>
<dbReference type="PANTHER" id="PTHR46926">
    <property type="entry name" value="GLUTAREDOXIN DOMAIN-CONTAINING CYSTEINE-RICH PROTEIN 2"/>
    <property type="match status" value="1"/>
</dbReference>
<dbReference type="PANTHER" id="PTHR46926:SF1">
    <property type="entry name" value="GLUTAREDOXIN DOMAIN-CONTAINING CYSTEINE-RICH PROTEIN 2"/>
    <property type="match status" value="1"/>
</dbReference>
<dbReference type="Pfam" id="PF23733">
    <property type="entry name" value="GRXCR1-2_C"/>
    <property type="match status" value="1"/>
</dbReference>
<dbReference type="SUPFAM" id="SSF57938">
    <property type="entry name" value="DnaJ/Hsp40 cysteine-rich domain"/>
    <property type="match status" value="1"/>
</dbReference>
<keyword id="KW-0966">Cell projection</keyword>
<keyword id="KW-0209">Deafness</keyword>
<keyword id="KW-1009">Hearing</keyword>
<keyword id="KW-1010">Non-syndromic deafness</keyword>
<keyword id="KW-1185">Reference proteome</keyword>
<protein>
    <recommendedName>
        <fullName>Glutaredoxin domain-containing cysteine-rich protein 2</fullName>
    </recommendedName>
    <alternativeName>
        <fullName>GRXCR1-like protein</fullName>
    </alternativeName>
    <alternativeName>
        <fullName>Glutaredoxin domain-containing cysteine-rich protein 1-like protein</fullName>
    </alternativeName>
</protein>
<evidence type="ECO:0000250" key="1">
    <source>
        <dbReference type="UniProtKB" id="Q3TYR5"/>
    </source>
</evidence>
<evidence type="ECO:0000256" key="2">
    <source>
        <dbReference type="SAM" id="MobiDB-lite"/>
    </source>
</evidence>
<evidence type="ECO:0000269" key="3">
    <source>
    </source>
</evidence>
<evidence type="ECO:0000305" key="4"/>